<keyword id="KW-0249">Electron transport</keyword>
<keyword id="KW-0472">Membrane</keyword>
<keyword id="KW-0496">Mitochondrion</keyword>
<keyword id="KW-0520">NAD</keyword>
<keyword id="KW-0679">Respiratory chain</keyword>
<keyword id="KW-1278">Translocase</keyword>
<keyword id="KW-0812">Transmembrane</keyword>
<keyword id="KW-1133">Transmembrane helix</keyword>
<keyword id="KW-0813">Transport</keyword>
<keyword id="KW-0830">Ubiquinone</keyword>
<evidence type="ECO:0000250" key="1"/>
<evidence type="ECO:0000255" key="2"/>
<evidence type="ECO:0000305" key="3"/>
<feature type="chain" id="PRO_0000117985" description="NADH-ubiquinone oxidoreductase chain 4">
    <location>
        <begin position="1"/>
        <end position="460"/>
    </location>
</feature>
<feature type="transmembrane region" description="Helical" evidence="2">
    <location>
        <begin position="22"/>
        <end position="42"/>
    </location>
</feature>
<feature type="transmembrane region" description="Helical" evidence="2">
    <location>
        <begin position="59"/>
        <end position="79"/>
    </location>
</feature>
<feature type="transmembrane region" description="Helical" evidence="2">
    <location>
        <begin position="94"/>
        <end position="113"/>
    </location>
</feature>
<feature type="transmembrane region" description="Helical" evidence="2">
    <location>
        <begin position="117"/>
        <end position="139"/>
    </location>
</feature>
<feature type="transmembrane region" description="Helical" evidence="2">
    <location>
        <begin position="148"/>
        <end position="168"/>
    </location>
</feature>
<feature type="transmembrane region" description="Helical" evidence="2">
    <location>
        <begin position="195"/>
        <end position="215"/>
    </location>
</feature>
<feature type="transmembrane region" description="Helical" evidence="2">
    <location>
        <begin position="231"/>
        <end position="251"/>
    </location>
</feature>
<feature type="transmembrane region" description="Helical" evidence="2">
    <location>
        <begin position="258"/>
        <end position="278"/>
    </location>
</feature>
<feature type="transmembrane region" description="Helical" evidence="2">
    <location>
        <begin position="286"/>
        <end position="306"/>
    </location>
</feature>
<feature type="transmembrane region" description="Helical" evidence="2">
    <location>
        <begin position="310"/>
        <end position="330"/>
    </location>
</feature>
<feature type="transmembrane region" description="Helical" evidence="2">
    <location>
        <begin position="343"/>
        <end position="362"/>
    </location>
</feature>
<feature type="transmembrane region" description="Helical" evidence="2">
    <location>
        <begin position="394"/>
        <end position="414"/>
    </location>
</feature>
<feature type="transmembrane region" description="Helical" evidence="2">
    <location>
        <begin position="436"/>
        <end position="456"/>
    </location>
</feature>
<organism>
    <name type="scientific">Scyliorhinus canicula</name>
    <name type="common">Small-spotted catshark</name>
    <name type="synonym">Squalus canicula</name>
    <dbReference type="NCBI Taxonomy" id="7830"/>
    <lineage>
        <taxon>Eukaryota</taxon>
        <taxon>Metazoa</taxon>
        <taxon>Chordata</taxon>
        <taxon>Craniata</taxon>
        <taxon>Vertebrata</taxon>
        <taxon>Chondrichthyes</taxon>
        <taxon>Elasmobranchii</taxon>
        <taxon>Galeomorphii</taxon>
        <taxon>Galeoidea</taxon>
        <taxon>Carcharhiniformes</taxon>
        <taxon>Scyliorhinidae</taxon>
        <taxon>Scyliorhinus</taxon>
    </lineage>
</organism>
<name>NU4M_SCYCA</name>
<sequence length="460" mass="52149">MLKILIPTIMLFPTTWFMNKKWLWSSITTHSLLISLLSLSWFKWNMDIGWDFSNQYLAIDPLSAPLLILTCWLLPLMILASQNHITPEPLTRQRIYISLLISLQVFLIMAFSATEMILFYIMFEATLIPTLIIITRWGNQTERLNAGTYFLFYTLIGSLPLLIALLFMQNDLNTLSMFIIQYSHLPNPSSWANKFWWTACLIAFLVKMPLYGVHLWLPKAHVEAPIAGSMILAAVLLKLGGYGMMRIIIMLNPITKEMAYPFIILAIWGIVMTSSICLRQTDLKSMIAYSSVSHMGLVAGAILIQTPWSFAGAITLMIAHGLVSSALFCLANTNYERIHSRTLLLARGVQVILPLMATWWLLANLANLALPPSPNLVGELLIISSLFNWSNWTILLTGIGVLITASYSLYMFLMTQRGLTSKHLMNLNPSHTREHLLLTLHVLPVLLLILKPELIWGWTF</sequence>
<geneLocation type="mitochondrion"/>
<accession>O79410</accession>
<comment type="function">
    <text evidence="1">Core subunit of the mitochondrial membrane respiratory chain NADH dehydrogenase (Complex I) that is believed to belong to the minimal assembly required for catalysis. Complex I functions in the transfer of electrons from NADH to the respiratory chain. The immediate electron acceptor for the enzyme is believed to be ubiquinone (By similarity).</text>
</comment>
<comment type="catalytic activity">
    <reaction>
        <text>a ubiquinone + NADH + 5 H(+)(in) = a ubiquinol + NAD(+) + 4 H(+)(out)</text>
        <dbReference type="Rhea" id="RHEA:29091"/>
        <dbReference type="Rhea" id="RHEA-COMP:9565"/>
        <dbReference type="Rhea" id="RHEA-COMP:9566"/>
        <dbReference type="ChEBI" id="CHEBI:15378"/>
        <dbReference type="ChEBI" id="CHEBI:16389"/>
        <dbReference type="ChEBI" id="CHEBI:17976"/>
        <dbReference type="ChEBI" id="CHEBI:57540"/>
        <dbReference type="ChEBI" id="CHEBI:57945"/>
        <dbReference type="EC" id="7.1.1.2"/>
    </reaction>
</comment>
<comment type="subcellular location">
    <subcellularLocation>
        <location evidence="1">Mitochondrion membrane</location>
        <topology evidence="1">Multi-pass membrane protein</topology>
    </subcellularLocation>
</comment>
<comment type="similarity">
    <text evidence="3">Belongs to the complex I subunit 4 family.</text>
</comment>
<gene>
    <name type="primary">MTND4</name>
    <name type="synonym">NAD4</name>
    <name type="synonym">NADH4</name>
    <name type="synonym">ND4</name>
</gene>
<dbReference type="EC" id="7.1.1.2"/>
<dbReference type="EMBL" id="Y16067">
    <property type="protein sequence ID" value="CAA76028.1"/>
    <property type="molecule type" value="Genomic_DNA"/>
</dbReference>
<dbReference type="PIR" id="T11309">
    <property type="entry name" value="T11309"/>
</dbReference>
<dbReference type="RefSeq" id="NP_007623.1">
    <property type="nucleotide sequence ID" value="NC_001950.1"/>
</dbReference>
<dbReference type="SMR" id="O79410"/>
<dbReference type="GeneID" id="808293"/>
<dbReference type="CTD" id="4538"/>
<dbReference type="OrthoDB" id="564260at2759"/>
<dbReference type="GO" id="GO:0031966">
    <property type="term" value="C:mitochondrial membrane"/>
    <property type="evidence" value="ECO:0007669"/>
    <property type="project" value="UniProtKB-SubCell"/>
</dbReference>
<dbReference type="GO" id="GO:0008137">
    <property type="term" value="F:NADH dehydrogenase (ubiquinone) activity"/>
    <property type="evidence" value="ECO:0007669"/>
    <property type="project" value="UniProtKB-EC"/>
</dbReference>
<dbReference type="GO" id="GO:0048039">
    <property type="term" value="F:ubiquinone binding"/>
    <property type="evidence" value="ECO:0007669"/>
    <property type="project" value="TreeGrafter"/>
</dbReference>
<dbReference type="GO" id="GO:0042773">
    <property type="term" value="P:ATP synthesis coupled electron transport"/>
    <property type="evidence" value="ECO:0007669"/>
    <property type="project" value="InterPro"/>
</dbReference>
<dbReference type="GO" id="GO:0015990">
    <property type="term" value="P:electron transport coupled proton transport"/>
    <property type="evidence" value="ECO:0007669"/>
    <property type="project" value="TreeGrafter"/>
</dbReference>
<dbReference type="InterPro" id="IPR000260">
    <property type="entry name" value="NADH4_N"/>
</dbReference>
<dbReference type="InterPro" id="IPR010227">
    <property type="entry name" value="NADH_Q_OxRdtase_chainM/4"/>
</dbReference>
<dbReference type="InterPro" id="IPR003918">
    <property type="entry name" value="NADH_UbQ_OxRdtase"/>
</dbReference>
<dbReference type="InterPro" id="IPR001750">
    <property type="entry name" value="ND/Mrp_TM"/>
</dbReference>
<dbReference type="NCBIfam" id="TIGR01972">
    <property type="entry name" value="NDH_I_M"/>
    <property type="match status" value="1"/>
</dbReference>
<dbReference type="PANTHER" id="PTHR43507">
    <property type="entry name" value="NADH-UBIQUINONE OXIDOREDUCTASE CHAIN 4"/>
    <property type="match status" value="1"/>
</dbReference>
<dbReference type="PANTHER" id="PTHR43507:SF20">
    <property type="entry name" value="NADH-UBIQUINONE OXIDOREDUCTASE CHAIN 4"/>
    <property type="match status" value="1"/>
</dbReference>
<dbReference type="Pfam" id="PF01059">
    <property type="entry name" value="Oxidored_q5_N"/>
    <property type="match status" value="1"/>
</dbReference>
<dbReference type="Pfam" id="PF00361">
    <property type="entry name" value="Proton_antipo_M"/>
    <property type="match status" value="1"/>
</dbReference>
<dbReference type="PRINTS" id="PR01437">
    <property type="entry name" value="NUOXDRDTASE4"/>
</dbReference>
<protein>
    <recommendedName>
        <fullName>NADH-ubiquinone oxidoreductase chain 4</fullName>
        <ecNumber>7.1.1.2</ecNumber>
    </recommendedName>
    <alternativeName>
        <fullName>NADH dehydrogenase subunit 4</fullName>
    </alternativeName>
</protein>
<reference key="1">
    <citation type="journal article" date="1998" name="Genetics">
        <title>The complete nucleotide sequence of the mitochondrial DNA of the dogfish, Scyliorhinus canicula.</title>
        <authorList>
            <person name="Delarbre C."/>
            <person name="Spruyt N."/>
            <person name="Delmarre C."/>
            <person name="Gallut C."/>
            <person name="Barriel V."/>
            <person name="Janvier P."/>
            <person name="Laudet V."/>
            <person name="Gachelin G."/>
        </authorList>
    </citation>
    <scope>NUCLEOTIDE SEQUENCE [GENOMIC DNA]</scope>
    <source>
        <tissue>Muscle</tissue>
    </source>
</reference>
<proteinExistence type="inferred from homology"/>